<comment type="function">
    <text evidence="1">Catalyzes the proton-dependent transport of sialic acid.</text>
</comment>
<comment type="catalytic activity">
    <reaction evidence="1">
        <text>N-acetylneuraminate(in) + H(+)(in) = N-acetylneuraminate(out) + H(+)(out)</text>
        <dbReference type="Rhea" id="RHEA:28987"/>
        <dbReference type="ChEBI" id="CHEBI:15378"/>
        <dbReference type="ChEBI" id="CHEBI:35418"/>
    </reaction>
</comment>
<comment type="subcellular location">
    <subcellularLocation>
        <location evidence="1">Cell inner membrane</location>
        <topology evidence="1">Multi-pass membrane protein</topology>
    </subcellularLocation>
</comment>
<comment type="similarity">
    <text evidence="1">Belongs to the major facilitator superfamily. Sialate:H(+) symporter (SHS) (TC 2.A.1.12) family.</text>
</comment>
<reference key="1">
    <citation type="journal article" date="2008" name="DNA Res.">
        <title>Complete genome sequence and comparative analysis of the wild-type commensal Escherichia coli strain SE11 isolated from a healthy adult.</title>
        <authorList>
            <person name="Oshima K."/>
            <person name="Toh H."/>
            <person name="Ogura Y."/>
            <person name="Sasamoto H."/>
            <person name="Morita H."/>
            <person name="Park S.-H."/>
            <person name="Ooka T."/>
            <person name="Iyoda S."/>
            <person name="Taylor T.D."/>
            <person name="Hayashi T."/>
            <person name="Itoh K."/>
            <person name="Hattori M."/>
        </authorList>
    </citation>
    <scope>NUCLEOTIDE SEQUENCE [LARGE SCALE GENOMIC DNA]</scope>
    <source>
        <strain>SE11</strain>
    </source>
</reference>
<accession>B6I1U2</accession>
<name>NANT_ECOSE</name>
<dbReference type="EMBL" id="AP009240">
    <property type="protein sequence ID" value="BAG79027.1"/>
    <property type="molecule type" value="Genomic_DNA"/>
</dbReference>
<dbReference type="RefSeq" id="WP_000108473.1">
    <property type="nucleotide sequence ID" value="NC_011415.1"/>
</dbReference>
<dbReference type="SMR" id="B6I1U2"/>
<dbReference type="KEGG" id="ecy:ECSE_3503"/>
<dbReference type="HOGENOM" id="CLU_001265_46_8_6"/>
<dbReference type="Proteomes" id="UP000008199">
    <property type="component" value="Chromosome"/>
</dbReference>
<dbReference type="GO" id="GO:0005886">
    <property type="term" value="C:plasma membrane"/>
    <property type="evidence" value="ECO:0007669"/>
    <property type="project" value="UniProtKB-SubCell"/>
</dbReference>
<dbReference type="GO" id="GO:0046943">
    <property type="term" value="F:carboxylic acid transmembrane transporter activity"/>
    <property type="evidence" value="ECO:0007669"/>
    <property type="project" value="TreeGrafter"/>
</dbReference>
<dbReference type="GO" id="GO:0015538">
    <property type="term" value="F:sialic acid:proton symporter activity"/>
    <property type="evidence" value="ECO:0007669"/>
    <property type="project" value="UniProtKB-UniRule"/>
</dbReference>
<dbReference type="CDD" id="cd17316">
    <property type="entry name" value="MFS_SV2_like"/>
    <property type="match status" value="1"/>
</dbReference>
<dbReference type="FunFam" id="1.20.1250.20:FF:000027">
    <property type="entry name" value="Sialic acid transporter NanT"/>
    <property type="match status" value="1"/>
</dbReference>
<dbReference type="FunFam" id="1.20.1250.20:FF:000038">
    <property type="entry name" value="Sialic acid transporter NanT"/>
    <property type="match status" value="1"/>
</dbReference>
<dbReference type="Gene3D" id="1.20.1250.20">
    <property type="entry name" value="MFS general substrate transporter like domains"/>
    <property type="match status" value="2"/>
</dbReference>
<dbReference type="HAMAP" id="MF_01238">
    <property type="entry name" value="MFS_NanT"/>
    <property type="match status" value="1"/>
</dbReference>
<dbReference type="InterPro" id="IPR011701">
    <property type="entry name" value="MFS"/>
</dbReference>
<dbReference type="InterPro" id="IPR020846">
    <property type="entry name" value="MFS_dom"/>
</dbReference>
<dbReference type="InterPro" id="IPR036259">
    <property type="entry name" value="MFS_trans_sf"/>
</dbReference>
<dbReference type="InterPro" id="IPR004742">
    <property type="entry name" value="SA_transporter"/>
</dbReference>
<dbReference type="NCBIfam" id="TIGR00891">
    <property type="entry name" value="2A0112"/>
    <property type="match status" value="1"/>
</dbReference>
<dbReference type="NCBIfam" id="NF003024">
    <property type="entry name" value="PRK03893.1"/>
    <property type="match status" value="1"/>
</dbReference>
<dbReference type="PANTHER" id="PTHR23508">
    <property type="entry name" value="CARBOXYLIC ACID TRANSPORTER PROTEIN HOMOLOG"/>
    <property type="match status" value="1"/>
</dbReference>
<dbReference type="PANTHER" id="PTHR23508:SF3">
    <property type="entry name" value="SIALIC ACID TRANSPORTER NANT"/>
    <property type="match status" value="1"/>
</dbReference>
<dbReference type="Pfam" id="PF07690">
    <property type="entry name" value="MFS_1"/>
    <property type="match status" value="1"/>
</dbReference>
<dbReference type="SUPFAM" id="SSF103473">
    <property type="entry name" value="MFS general substrate transporter"/>
    <property type="match status" value="1"/>
</dbReference>
<dbReference type="PROSITE" id="PS50850">
    <property type="entry name" value="MFS"/>
    <property type="match status" value="1"/>
</dbReference>
<protein>
    <recommendedName>
        <fullName evidence="1">Sialic acid transporter NanT</fullName>
    </recommendedName>
    <alternativeName>
        <fullName evidence="1">Sialic acid permease</fullName>
    </alternativeName>
    <alternativeName>
        <fullName evidence="1">Sialic acid/H(+) symporter</fullName>
    </alternativeName>
</protein>
<evidence type="ECO:0000255" key="1">
    <source>
        <dbReference type="HAMAP-Rule" id="MF_01238"/>
    </source>
</evidence>
<feature type="chain" id="PRO_1000214051" description="Sialic acid transporter NanT">
    <location>
        <begin position="1"/>
        <end position="496"/>
    </location>
</feature>
<feature type="transmembrane region" description="Helical" evidence="1">
    <location>
        <begin position="22"/>
        <end position="42"/>
    </location>
</feature>
<feature type="transmembrane region" description="Helical" evidence="1">
    <location>
        <begin position="58"/>
        <end position="78"/>
    </location>
</feature>
<feature type="transmembrane region" description="Helical" evidence="1">
    <location>
        <begin position="92"/>
        <end position="112"/>
    </location>
</feature>
<feature type="transmembrane region" description="Helical" evidence="1">
    <location>
        <begin position="116"/>
        <end position="136"/>
    </location>
</feature>
<feature type="transmembrane region" description="Helical" evidence="1">
    <location>
        <begin position="148"/>
        <end position="168"/>
    </location>
</feature>
<feature type="transmembrane region" description="Helical" evidence="1">
    <location>
        <begin position="170"/>
        <end position="190"/>
    </location>
</feature>
<feature type="transmembrane region" description="Helical" evidence="1">
    <location>
        <begin position="224"/>
        <end position="244"/>
    </location>
</feature>
<feature type="transmembrane region" description="Helical" evidence="1">
    <location>
        <begin position="247"/>
        <end position="267"/>
    </location>
</feature>
<feature type="transmembrane region" description="Helical" evidence="1">
    <location>
        <begin position="278"/>
        <end position="298"/>
    </location>
</feature>
<feature type="transmembrane region" description="Helical" evidence="1">
    <location>
        <begin position="313"/>
        <end position="333"/>
    </location>
</feature>
<feature type="transmembrane region" description="Helical" evidence="1">
    <location>
        <begin position="353"/>
        <end position="375"/>
    </location>
</feature>
<feature type="transmembrane region" description="Helical" evidence="1">
    <location>
        <begin position="406"/>
        <end position="426"/>
    </location>
</feature>
<feature type="transmembrane region" description="Helical" evidence="1">
    <location>
        <begin position="431"/>
        <end position="451"/>
    </location>
</feature>
<organism>
    <name type="scientific">Escherichia coli (strain SE11)</name>
    <dbReference type="NCBI Taxonomy" id="409438"/>
    <lineage>
        <taxon>Bacteria</taxon>
        <taxon>Pseudomonadati</taxon>
        <taxon>Pseudomonadota</taxon>
        <taxon>Gammaproteobacteria</taxon>
        <taxon>Enterobacterales</taxon>
        <taxon>Enterobacteriaceae</taxon>
        <taxon>Escherichia</taxon>
    </lineage>
</organism>
<sequence length="496" mass="53568">MSTTTQNIPWYRHLNRAQWRAFSAAWLGYLLDGFDFVLIALVLTEVQGEFGLTTVQAASLISAAFISRWFGGLMLGAMGDRYGRRLAMVTSIVLFSAGTLACGFAPGYITMFIARLVIGMGMAGEYGSSATYVIESWPKHLRNKASGFLISGFSVGAVVAAQVYSLVVPVWGWRALFFIGILPIIFALWLRKNIPEAEDWKEKHGGKAPVRTMVDILYRGEHRIANIVMTLAAATALWFCFAGNLQNAAIVAVLGLLCAAIFISFMVQSTGKRWPTGVMLMVVVLFAFLYSWPIQALLPTYLKTDLAYDPHTVANVLFFSGFGAAVGCCVGGFLGDWLGTRKAYVCSLLASQLLIIPVFAIGGANVWVLGLLLFFQQMLGQGIAGILPKLIGGYFDTDQRAAGLGFTYNVGALGGALAPIIGALIAQRLDLGTALASLSFSLTFVVILLIGLDMPSRVQRWLRPEALRTHDAIDGKPFSGAVPFGSAKNDLVKTKS</sequence>
<proteinExistence type="inferred from homology"/>
<gene>
    <name evidence="1" type="primary">nanT</name>
    <name type="ordered locus">ECSE_3503</name>
</gene>
<keyword id="KW-0997">Cell inner membrane</keyword>
<keyword id="KW-1003">Cell membrane</keyword>
<keyword id="KW-0472">Membrane</keyword>
<keyword id="KW-0762">Sugar transport</keyword>
<keyword id="KW-0812">Transmembrane</keyword>
<keyword id="KW-1133">Transmembrane helix</keyword>
<keyword id="KW-0813">Transport</keyword>